<proteinExistence type="inferred from homology"/>
<reference key="1">
    <citation type="submission" date="2008-10" db="EMBL/GenBank/DDBJ databases">
        <title>Genome sequence of Bacillus cereus AH820.</title>
        <authorList>
            <person name="Dodson R.J."/>
            <person name="Durkin A.S."/>
            <person name="Rosovitz M.J."/>
            <person name="Rasko D.A."/>
            <person name="Hoffmaster A."/>
            <person name="Ravel J."/>
            <person name="Sutton G."/>
        </authorList>
    </citation>
    <scope>NUCLEOTIDE SEQUENCE [LARGE SCALE GENOMIC DNA]</scope>
    <source>
        <strain>AH820</strain>
    </source>
</reference>
<keyword id="KW-1003">Cell membrane</keyword>
<keyword id="KW-0472">Membrane</keyword>
<keyword id="KW-0812">Transmembrane</keyword>
<keyword id="KW-1133">Transmembrane helix</keyword>
<sequence>MSIKYSNKINKIRTFALSLVFIGLFIAYLGVFFRENIIIMTTFMMVGFLAVIASTVVYFWIGMLSTKTVQIICPSCDKPTKMLGRVDACMHCNQPLTMDRDLEGKEFDEKYNKKSYKS</sequence>
<protein>
    <recommendedName>
        <fullName evidence="1">UPF0295 protein BCAH820_0521</fullName>
    </recommendedName>
</protein>
<feature type="chain" id="PRO_1000198207" description="UPF0295 protein BCAH820_0521">
    <location>
        <begin position="1"/>
        <end position="118"/>
    </location>
</feature>
<feature type="transmembrane region" description="Helical" evidence="1">
    <location>
        <begin position="12"/>
        <end position="32"/>
    </location>
</feature>
<feature type="transmembrane region" description="Helical" evidence="1">
    <location>
        <begin position="43"/>
        <end position="63"/>
    </location>
</feature>
<name>Y521_BACC0</name>
<evidence type="ECO:0000255" key="1">
    <source>
        <dbReference type="HAMAP-Rule" id="MF_01502"/>
    </source>
</evidence>
<organism>
    <name type="scientific">Bacillus cereus (strain AH820)</name>
    <dbReference type="NCBI Taxonomy" id="405535"/>
    <lineage>
        <taxon>Bacteria</taxon>
        <taxon>Bacillati</taxon>
        <taxon>Bacillota</taxon>
        <taxon>Bacilli</taxon>
        <taxon>Bacillales</taxon>
        <taxon>Bacillaceae</taxon>
        <taxon>Bacillus</taxon>
        <taxon>Bacillus cereus group</taxon>
    </lineage>
</organism>
<accession>B7JNH3</accession>
<gene>
    <name type="ordered locus">BCAH820_0521</name>
</gene>
<comment type="subcellular location">
    <subcellularLocation>
        <location evidence="1">Cell membrane</location>
        <topology evidence="1">Multi-pass membrane protein</topology>
    </subcellularLocation>
</comment>
<comment type="similarity">
    <text evidence="1">Belongs to the UPF0295 family.</text>
</comment>
<dbReference type="EMBL" id="CP001283">
    <property type="protein sequence ID" value="ACK91768.1"/>
    <property type="molecule type" value="Genomic_DNA"/>
</dbReference>
<dbReference type="RefSeq" id="WP_000025061.1">
    <property type="nucleotide sequence ID" value="NC_011773.1"/>
</dbReference>
<dbReference type="KEGG" id="bcu:BCAH820_0521"/>
<dbReference type="HOGENOM" id="CLU_143991_0_0_9"/>
<dbReference type="Proteomes" id="UP000001363">
    <property type="component" value="Chromosome"/>
</dbReference>
<dbReference type="GO" id="GO:0005886">
    <property type="term" value="C:plasma membrane"/>
    <property type="evidence" value="ECO:0007669"/>
    <property type="project" value="UniProtKB-SubCell"/>
</dbReference>
<dbReference type="HAMAP" id="MF_01502">
    <property type="entry name" value="UPF0295"/>
    <property type="match status" value="1"/>
</dbReference>
<dbReference type="InterPro" id="IPR020912">
    <property type="entry name" value="UPF0295"/>
</dbReference>
<dbReference type="NCBIfam" id="NF002796">
    <property type="entry name" value="PRK02935.1"/>
    <property type="match status" value="1"/>
</dbReference>
<dbReference type="Pfam" id="PF11023">
    <property type="entry name" value="DUF2614"/>
    <property type="match status" value="1"/>
</dbReference>